<keyword id="KW-0158">Chromosome</keyword>
<keyword id="KW-0238">DNA-binding</keyword>
<keyword id="KW-0520">NAD</keyword>
<keyword id="KW-0539">Nucleus</keyword>
<keyword id="KW-1185">Reference proteome</keyword>
<dbReference type="EMBL" id="BC092548">
    <property type="protein sequence ID" value="AAH92548.1"/>
    <property type="molecule type" value="mRNA"/>
</dbReference>
<dbReference type="RefSeq" id="NP_001025665.1">
    <property type="nucleotide sequence ID" value="NM_001030494.1"/>
</dbReference>
<dbReference type="SMR" id="Q562D5"/>
<dbReference type="FunCoup" id="Q562D5">
    <property type="interactions" value="3806"/>
</dbReference>
<dbReference type="STRING" id="8364.ENSXETP00000006808"/>
<dbReference type="DNASU" id="595057"/>
<dbReference type="GeneID" id="595057"/>
<dbReference type="KEGG" id="xtr:595057"/>
<dbReference type="AGR" id="Xenbase:XB-GENE-958848"/>
<dbReference type="CTD" id="84656"/>
<dbReference type="Xenbase" id="XB-GENE-958848">
    <property type="gene designation" value="glyr1"/>
</dbReference>
<dbReference type="InParanoid" id="Q562D5"/>
<dbReference type="OMA" id="QMISGIT"/>
<dbReference type="OrthoDB" id="21615at2759"/>
<dbReference type="Proteomes" id="UP000008143">
    <property type="component" value="Chromosome 9"/>
</dbReference>
<dbReference type="GO" id="GO:0005694">
    <property type="term" value="C:chromosome"/>
    <property type="evidence" value="ECO:0007669"/>
    <property type="project" value="UniProtKB-SubCell"/>
</dbReference>
<dbReference type="GO" id="GO:0005634">
    <property type="term" value="C:nucleus"/>
    <property type="evidence" value="ECO:0007669"/>
    <property type="project" value="UniProtKB-SubCell"/>
</dbReference>
<dbReference type="GO" id="GO:0003677">
    <property type="term" value="F:DNA binding"/>
    <property type="evidence" value="ECO:0007669"/>
    <property type="project" value="UniProtKB-KW"/>
</dbReference>
<dbReference type="GO" id="GO:0051287">
    <property type="term" value="F:NAD binding"/>
    <property type="evidence" value="ECO:0007669"/>
    <property type="project" value="InterPro"/>
</dbReference>
<dbReference type="GO" id="GO:0050661">
    <property type="term" value="F:NADP binding"/>
    <property type="evidence" value="ECO:0007669"/>
    <property type="project" value="InterPro"/>
</dbReference>
<dbReference type="CDD" id="cd05836">
    <property type="entry name" value="PWWP_GLYR1"/>
    <property type="match status" value="1"/>
</dbReference>
<dbReference type="FunFam" id="3.40.50.720:FF:000058">
    <property type="entry name" value="Putative oxidoreductase GLYR1 homolog"/>
    <property type="match status" value="1"/>
</dbReference>
<dbReference type="FunFam" id="1.10.1040.10:FF:000011">
    <property type="entry name" value="putative oxidoreductase GLYR1 isoform X1"/>
    <property type="match status" value="1"/>
</dbReference>
<dbReference type="FunFam" id="2.30.30.140:FF:000027">
    <property type="entry name" value="putative oxidoreductase GLYR1 isoform X1"/>
    <property type="match status" value="1"/>
</dbReference>
<dbReference type="Gene3D" id="2.30.30.140">
    <property type="match status" value="1"/>
</dbReference>
<dbReference type="Gene3D" id="1.10.1040.10">
    <property type="entry name" value="N-(1-d-carboxylethyl)-l-norvaline Dehydrogenase, domain 2"/>
    <property type="match status" value="1"/>
</dbReference>
<dbReference type="Gene3D" id="3.40.50.720">
    <property type="entry name" value="NAD(P)-binding Rossmann-like Domain"/>
    <property type="match status" value="1"/>
</dbReference>
<dbReference type="InterPro" id="IPR008927">
    <property type="entry name" value="6-PGluconate_DH-like_C_sf"/>
</dbReference>
<dbReference type="InterPro" id="IPR013328">
    <property type="entry name" value="6PGD_dom2"/>
</dbReference>
<dbReference type="InterPro" id="IPR006115">
    <property type="entry name" value="6PGDH_NADP-bd"/>
</dbReference>
<dbReference type="InterPro" id="IPR035501">
    <property type="entry name" value="GLYR1_PWWP"/>
</dbReference>
<dbReference type="InterPro" id="IPR029154">
    <property type="entry name" value="HIBADH-like_NADP-bd"/>
</dbReference>
<dbReference type="InterPro" id="IPR051265">
    <property type="entry name" value="HIBADH-related_NP60_sf"/>
</dbReference>
<dbReference type="InterPro" id="IPR036291">
    <property type="entry name" value="NAD(P)-bd_dom_sf"/>
</dbReference>
<dbReference type="InterPro" id="IPR000313">
    <property type="entry name" value="PWWP_dom"/>
</dbReference>
<dbReference type="PANTHER" id="PTHR43580:SF2">
    <property type="entry name" value="CYTOKINE-LIKE NUCLEAR FACTOR N-PAC"/>
    <property type="match status" value="1"/>
</dbReference>
<dbReference type="PANTHER" id="PTHR43580">
    <property type="entry name" value="OXIDOREDUCTASE GLYR1-RELATED"/>
    <property type="match status" value="1"/>
</dbReference>
<dbReference type="Pfam" id="PF14833">
    <property type="entry name" value="NAD_binding_11"/>
    <property type="match status" value="1"/>
</dbReference>
<dbReference type="Pfam" id="PF03446">
    <property type="entry name" value="NAD_binding_2"/>
    <property type="match status" value="1"/>
</dbReference>
<dbReference type="Pfam" id="PF00855">
    <property type="entry name" value="PWWP"/>
    <property type="match status" value="1"/>
</dbReference>
<dbReference type="SMART" id="SM00293">
    <property type="entry name" value="PWWP"/>
    <property type="match status" value="1"/>
</dbReference>
<dbReference type="SUPFAM" id="SSF48179">
    <property type="entry name" value="6-phosphogluconate dehydrogenase C-terminal domain-like"/>
    <property type="match status" value="1"/>
</dbReference>
<dbReference type="SUPFAM" id="SSF51735">
    <property type="entry name" value="NAD(P)-binding Rossmann-fold domains"/>
    <property type="match status" value="1"/>
</dbReference>
<dbReference type="SUPFAM" id="SSF63748">
    <property type="entry name" value="Tudor/PWWP/MBT"/>
    <property type="match status" value="1"/>
</dbReference>
<dbReference type="PROSITE" id="PS50812">
    <property type="entry name" value="PWWP"/>
    <property type="match status" value="1"/>
</dbReference>
<evidence type="ECO:0000250" key="1">
    <source>
        <dbReference type="UniProtKB" id="Q49A26"/>
    </source>
</evidence>
<evidence type="ECO:0000255" key="2">
    <source>
        <dbReference type="PROSITE-ProRule" id="PRU00162"/>
    </source>
</evidence>
<evidence type="ECO:0000256" key="3">
    <source>
        <dbReference type="SAM" id="MobiDB-lite"/>
    </source>
</evidence>
<evidence type="ECO:0000305" key="4"/>
<comment type="function">
    <text evidence="1">Cytokine-like nuclear factor with chromatin gene reader activity involved in chromatin modification and regulation of gene expression. Acts as a nucleosome-destabilizing factor that is recruited to genes during transcriptional activation. Recognizes and binds histone H3 without a preference for specific epigenetic markers and also binds DNA. Interacts with KDM1B and promotes its histone demethylase activity by facilitating the capture of H3 tails, they form a multifunctional enzyme complex that modifies transcribed chromatin and facilitates Pol II transcription through nucleosomes.</text>
</comment>
<comment type="subunit">
    <text evidence="1">Homotetramere. Binds to mononucleosomes.</text>
</comment>
<comment type="subcellular location">
    <subcellularLocation>
        <location evidence="1">Nucleus</location>
    </subcellularLocation>
    <subcellularLocation>
        <location evidence="1">Chromosome</location>
    </subcellularLocation>
    <text evidence="1">Found in actively RNAPolII-transcribed gene bodies.</text>
</comment>
<comment type="domain">
    <text evidence="1">The A.T hook DNA-binding domain is required for the interaction with MAPK14.</text>
</comment>
<comment type="domain">
    <text evidence="1">The PWWP domain is a H3 reader and strongly binds DNA.</text>
</comment>
<comment type="domain">
    <text evidence="1">In the dehydrogenase domain, the conserved NAD(P)H-binding sites and sequence similarity to plant dehydrogenases suggest that this protein may have oxidoreductase activity. However, since the active site is not conserved, the dehydrogenase domain seems to serve as a catalytically inert oligomerization module.</text>
</comment>
<comment type="similarity">
    <text evidence="4">Belongs to the HIBADH-related family. NP60 subfamily.</text>
</comment>
<feature type="chain" id="PRO_0000312127" description="Cytokine-like nuclear factor N-PAC">
    <location>
        <begin position="1"/>
        <end position="534"/>
    </location>
</feature>
<feature type="domain" description="PWWP" evidence="2">
    <location>
        <begin position="8"/>
        <end position="66"/>
    </location>
</feature>
<feature type="DNA-binding region" description="A.T hook" evidence="4">
    <location>
        <begin position="144"/>
        <end position="156"/>
    </location>
</feature>
<feature type="region of interest" description="Disordered" evidence="3">
    <location>
        <begin position="93"/>
        <end position="168"/>
    </location>
</feature>
<feature type="region of interest" description="Interaction with histone H3" evidence="1">
    <location>
        <begin position="190"/>
        <end position="193"/>
    </location>
</feature>
<feature type="region of interest" description="Dehydrogenase domain" evidence="1">
    <location>
        <begin position="242"/>
        <end position="534"/>
    </location>
</feature>
<feature type="compositionally biased region" description="Basic and acidic residues" evidence="3">
    <location>
        <begin position="93"/>
        <end position="122"/>
    </location>
</feature>
<feature type="compositionally biased region" description="Basic and acidic residues" evidence="3">
    <location>
        <begin position="138"/>
        <end position="157"/>
    </location>
</feature>
<feature type="binding site" evidence="1">
    <location>
        <begin position="252"/>
        <end position="266"/>
    </location>
    <ligand>
        <name>NAD(+)</name>
        <dbReference type="ChEBI" id="CHEBI:57540"/>
    </ligand>
</feature>
<feature type="binding site" evidence="1">
    <location>
        <position position="343"/>
    </location>
    <ligand>
        <name>NAD(+)</name>
        <dbReference type="ChEBI" id="CHEBI:57540"/>
    </ligand>
</feature>
<feature type="binding site" evidence="1">
    <location>
        <position position="486"/>
    </location>
    <ligand>
        <name>NAD(+)</name>
        <dbReference type="ChEBI" id="CHEBI:57540"/>
    </ligand>
</feature>
<reference key="1">
    <citation type="submission" date="2005-04" db="EMBL/GenBank/DDBJ databases">
        <authorList>
            <consortium name="NIH - Xenopus Gene Collection (XGC) project"/>
        </authorList>
    </citation>
    <scope>NUCLEOTIDE SEQUENCE [LARGE SCALE MRNA]</scope>
</reference>
<organism>
    <name type="scientific">Xenopus tropicalis</name>
    <name type="common">Western clawed frog</name>
    <name type="synonym">Silurana tropicalis</name>
    <dbReference type="NCBI Taxonomy" id="8364"/>
    <lineage>
        <taxon>Eukaryota</taxon>
        <taxon>Metazoa</taxon>
        <taxon>Chordata</taxon>
        <taxon>Craniata</taxon>
        <taxon>Vertebrata</taxon>
        <taxon>Euteleostomi</taxon>
        <taxon>Amphibia</taxon>
        <taxon>Batrachia</taxon>
        <taxon>Anura</taxon>
        <taxon>Pipoidea</taxon>
        <taxon>Pipidae</taxon>
        <taxon>Xenopodinae</taxon>
        <taxon>Xenopus</taxon>
        <taxon>Silurana</taxon>
    </lineage>
</organism>
<protein>
    <recommendedName>
        <fullName>Cytokine-like nuclear factor N-PAC</fullName>
        <shortName>NPAC</shortName>
    </recommendedName>
    <alternativeName>
        <fullName>Glyoxylate reductase 1 homolog</fullName>
    </alternativeName>
    <alternativeName>
        <fullName>Nuclear protein NP60</fullName>
    </alternativeName>
    <alternativeName>
        <fullName>Putative oxidoreductase GLYR1</fullName>
    </alternativeName>
</protein>
<gene>
    <name type="primary">glyr1</name>
    <name type="synonym">np60</name>
</gene>
<name>GLYR1_XENTR</name>
<proteinExistence type="evidence at transcript level"/>
<sequence length="534" mass="58475">MAAVSLRQGDLVWGKLGRYPPWPGKIVNPPKDLKKPRGKKCLFVKFFGTEDHAWIKVEQLKPYHAHKEEMIKANKGKRFQQAVDAVEEFLKKAKAKEHAKEHNSSDEKGKKGEGKGKKQTGEKRRKSSESSSHSPQKRSRDQSPRKRGRPPKDDKDSPSPQPSSLKKLAMKTVSRFSWPPPSTEDDLGSDSWLIHGHRTLGTEMILKKPSVTYQAITKRLKISEEDSGSTSIQAADSTAINGNIIPTDKKIGFLGLGLMGSGIVSNLLKMGHTVTVWNRTAEKCDLFIQEGAHMGRTPAEVVSTCDITFACVADPKAAKDLVLGPSGVLQGIRPGKCYVDMSTVDPETVAELAQVIVSRGGRFLEAPVSGNQQLSNDGMLVILAAGDQGVYEDCSSCFLAMGKTSFFLGEVGNAARMMLILNMVQGSFMATIAEGMTLAQVTGQSQQTLLDILNQGQLASIFLDQKCQNILQGNFKPDFYLKYIQKDLRLAIALGDSVNHPTPMAAAANEVYKRAKALDQSDNDMSAVYRAYIH</sequence>
<accession>Q562D5</accession>